<reference key="1">
    <citation type="journal article" date="1996" name="DNA Res.">
        <title>Sequence analysis of the genome of the unicellular cyanobacterium Synechocystis sp. strain PCC6803. II. Sequence determination of the entire genome and assignment of potential protein-coding regions.</title>
        <authorList>
            <person name="Kaneko T."/>
            <person name="Sato S."/>
            <person name="Kotani H."/>
            <person name="Tanaka A."/>
            <person name="Asamizu E."/>
            <person name="Nakamura Y."/>
            <person name="Miyajima N."/>
            <person name="Hirosawa M."/>
            <person name="Sugiura M."/>
            <person name="Sasamoto S."/>
            <person name="Kimura T."/>
            <person name="Hosouchi T."/>
            <person name="Matsuno A."/>
            <person name="Muraki A."/>
            <person name="Nakazaki N."/>
            <person name="Naruo K."/>
            <person name="Okumura S."/>
            <person name="Shimpo S."/>
            <person name="Takeuchi C."/>
            <person name="Wada T."/>
            <person name="Watanabe A."/>
            <person name="Yamada M."/>
            <person name="Yasuda M."/>
            <person name="Tabata S."/>
        </authorList>
    </citation>
    <scope>NUCLEOTIDE SEQUENCE [LARGE SCALE GENOMIC DNA]</scope>
    <source>
        <strain>ATCC 27184 / PCC 6803 / Kazusa</strain>
    </source>
</reference>
<proteinExistence type="inferred from homology"/>
<gene>
    <name type="primary">dfa4</name>
    <name type="ordered locus">sll0219</name>
</gene>
<sequence length="594" mass="65597">MISPIGGLSQALHSPSDSIFVASLPRDIQVAEIAPQTKVLRSRLWDRLKFEVEYGRRRGTTSNSYLIQADHTALIDPPGESFCDLYLAELPKYLDLAQLDYIVASHVNPNRMVTLEQLLRRATKAKLICSRPAAKVLKATFPHWEERFQTVRSQDMLDLGRGHKLQLMTLPTPRWPDGLCAYDAGSQILFSDKLFGTHVCGDAIFDEDWRQLGGDRRFYFDCLHAPQTRQVETALDQFDPLTLKMIAPGHGPLVRFSLSRLYSDYRQWCQQQPSQTLKVALIYASAYGNTATMARAIAQGLVKAGVAVETINCEIAEPNEIVEAIQACDGFIVGSPTLGSHAPVQIQTALGIVLSSATKTKLAGVFGSYGWSGEAIDLIENKLKDGGYRFGFEAIRIQFSPNLDALDVCTTSGANFARQLRTHKRQRIARQATTETQADRTQQAVGRIIGSIGVVTTQTTGRHQGILTSWVSQASFTPPGIMLAIPGEFDAYGLAGQNKAFVLNLLQEGRSVRRHFDHQPLPKDGDNPFSRLEHYSTQNGCLILAEALAYLECLVQSWSNIGDHVLVYATVQAGQVLQPNGITAIRHRKSGGQY</sequence>
<evidence type="ECO:0000250" key="1"/>
<evidence type="ECO:0000255" key="2">
    <source>
        <dbReference type="PROSITE-ProRule" id="PRU00088"/>
    </source>
</evidence>
<evidence type="ECO:0000305" key="3"/>
<comment type="function">
    <text evidence="1">Mediates electron transfer from NADH to oxygen, reducing it to water. This modular protein has 3 redox cofactors, in other organisms the same activity requires 2 or 3 proteins (By similarity).</text>
</comment>
<comment type="cofactor">
    <cofactor>
        <name>Fe cation</name>
        <dbReference type="ChEBI" id="CHEBI:24875"/>
    </cofactor>
    <text>Binds 2 iron ions per subunit.</text>
</comment>
<comment type="miscellaneous">
    <text evidence="1">By homology with NorV in E.coli, may be involved in nitric oxide detoxification.</text>
</comment>
<comment type="similarity">
    <text evidence="3">In the N-terminal section; belongs to the zinc metallo-hydrolase group 3 family.</text>
</comment>
<comment type="similarity">
    <text evidence="3">In the C-terminal section; belongs to the flavodoxin reductase family.</text>
</comment>
<accession>P72721</accession>
<protein>
    <recommendedName>
        <fullName>Putative diflavin flavoprotein A 4</fullName>
        <ecNumber>1.-.-.-</ecNumber>
    </recommendedName>
</protein>
<name>DFA4_SYNY3</name>
<feature type="chain" id="PRO_0000216804" description="Putative diflavin flavoprotein A 4">
    <location>
        <begin position="1"/>
        <end position="594"/>
    </location>
</feature>
<feature type="domain" description="Flavodoxin-like" evidence="2">
    <location>
        <begin position="279"/>
        <end position="417"/>
    </location>
</feature>
<feature type="region of interest" description="Zinc metallo-hydrolase">
    <location>
        <begin position="57"/>
        <end position="250"/>
    </location>
</feature>
<feature type="region of interest" description="Flavodoxin-reductase-like">
    <location>
        <begin position="445"/>
        <end position="594"/>
    </location>
</feature>
<organism>
    <name type="scientific">Synechocystis sp. (strain ATCC 27184 / PCC 6803 / Kazusa)</name>
    <dbReference type="NCBI Taxonomy" id="1111708"/>
    <lineage>
        <taxon>Bacteria</taxon>
        <taxon>Bacillati</taxon>
        <taxon>Cyanobacteriota</taxon>
        <taxon>Cyanophyceae</taxon>
        <taxon>Synechococcales</taxon>
        <taxon>Merismopediaceae</taxon>
        <taxon>Synechocystis</taxon>
    </lineage>
</organism>
<keyword id="KW-0249">Electron transport</keyword>
<keyword id="KW-0560">Oxidoreductase</keyword>
<keyword id="KW-1185">Reference proteome</keyword>
<keyword id="KW-0813">Transport</keyword>
<dbReference type="EC" id="1.-.-.-"/>
<dbReference type="EMBL" id="BA000022">
    <property type="protein sequence ID" value="BAA16728.1"/>
    <property type="molecule type" value="Genomic_DNA"/>
</dbReference>
<dbReference type="PIR" id="S74576">
    <property type="entry name" value="S74576"/>
</dbReference>
<dbReference type="SMR" id="P72721"/>
<dbReference type="STRING" id="1148.gene:10497583"/>
<dbReference type="PaxDb" id="1148-1651801"/>
<dbReference type="EnsemblBacteria" id="BAA16728">
    <property type="protein sequence ID" value="BAA16728"/>
    <property type="gene ID" value="BAA16728"/>
</dbReference>
<dbReference type="KEGG" id="syn:sll0219"/>
<dbReference type="eggNOG" id="COG0426">
    <property type="taxonomic scope" value="Bacteria"/>
</dbReference>
<dbReference type="eggNOG" id="COG1853">
    <property type="taxonomic scope" value="Bacteria"/>
</dbReference>
<dbReference type="InParanoid" id="P72721"/>
<dbReference type="PhylomeDB" id="P72721"/>
<dbReference type="Proteomes" id="UP000001425">
    <property type="component" value="Chromosome"/>
</dbReference>
<dbReference type="GO" id="GO:0009055">
    <property type="term" value="F:electron transfer activity"/>
    <property type="evidence" value="ECO:0007669"/>
    <property type="project" value="InterPro"/>
</dbReference>
<dbReference type="GO" id="GO:0010181">
    <property type="term" value="F:FMN binding"/>
    <property type="evidence" value="ECO:0007669"/>
    <property type="project" value="InterPro"/>
</dbReference>
<dbReference type="GO" id="GO:0016646">
    <property type="term" value="F:oxidoreductase activity, acting on the CH-NH group of donors, NAD or NADP as acceptor"/>
    <property type="evidence" value="ECO:0007669"/>
    <property type="project" value="UniProtKB-ARBA"/>
</dbReference>
<dbReference type="CDD" id="cd07709">
    <property type="entry name" value="flavodiiron_proteins_MBL-fold"/>
    <property type="match status" value="1"/>
</dbReference>
<dbReference type="Gene3D" id="3.40.50.360">
    <property type="match status" value="1"/>
</dbReference>
<dbReference type="Gene3D" id="2.30.110.10">
    <property type="entry name" value="Electron Transport, Fmn-binding Protein, Chain A"/>
    <property type="match status" value="1"/>
</dbReference>
<dbReference type="Gene3D" id="3.60.15.10">
    <property type="entry name" value="Ribonuclease Z/Hydroxyacylglutathione hydrolase-like"/>
    <property type="match status" value="1"/>
</dbReference>
<dbReference type="InterPro" id="IPR002563">
    <property type="entry name" value="Flavin_Rdtase-like_dom"/>
</dbReference>
<dbReference type="InterPro" id="IPR008254">
    <property type="entry name" value="Flavodoxin/NO_synth"/>
</dbReference>
<dbReference type="InterPro" id="IPR001226">
    <property type="entry name" value="Flavodoxin_CS"/>
</dbReference>
<dbReference type="InterPro" id="IPR029039">
    <property type="entry name" value="Flavoprotein-like_sf"/>
</dbReference>
<dbReference type="InterPro" id="IPR001279">
    <property type="entry name" value="Metallo-B-lactamas"/>
</dbReference>
<dbReference type="InterPro" id="IPR051285">
    <property type="entry name" value="NADH_oxidoreductase_modular"/>
</dbReference>
<dbReference type="InterPro" id="IPR045761">
    <property type="entry name" value="ODP_dom"/>
</dbReference>
<dbReference type="InterPro" id="IPR036866">
    <property type="entry name" value="RibonucZ/Hydroxyglut_hydro"/>
</dbReference>
<dbReference type="InterPro" id="IPR012349">
    <property type="entry name" value="Split_barrel_FMN-bd"/>
</dbReference>
<dbReference type="PANTHER" id="PTHR32145">
    <property type="entry name" value="DIFLAVIN FLAVOPROTEIN A 2-RELATED"/>
    <property type="match status" value="1"/>
</dbReference>
<dbReference type="PANTHER" id="PTHR32145:SF32">
    <property type="entry name" value="DIFLAVIN FLAVOPROTEIN A 4-RELATED"/>
    <property type="match status" value="1"/>
</dbReference>
<dbReference type="Pfam" id="PF01613">
    <property type="entry name" value="Flavin_Reduct"/>
    <property type="match status" value="1"/>
</dbReference>
<dbReference type="Pfam" id="PF00258">
    <property type="entry name" value="Flavodoxin_1"/>
    <property type="match status" value="1"/>
</dbReference>
<dbReference type="Pfam" id="PF19583">
    <property type="entry name" value="ODP"/>
    <property type="match status" value="1"/>
</dbReference>
<dbReference type="SMART" id="SM00903">
    <property type="entry name" value="Flavin_Reduct"/>
    <property type="match status" value="1"/>
</dbReference>
<dbReference type="SMART" id="SM00849">
    <property type="entry name" value="Lactamase_B"/>
    <property type="match status" value="1"/>
</dbReference>
<dbReference type="SUPFAM" id="SSF52218">
    <property type="entry name" value="Flavoproteins"/>
    <property type="match status" value="1"/>
</dbReference>
<dbReference type="SUPFAM" id="SSF50475">
    <property type="entry name" value="FMN-binding split barrel"/>
    <property type="match status" value="1"/>
</dbReference>
<dbReference type="SUPFAM" id="SSF56281">
    <property type="entry name" value="Metallo-hydrolase/oxidoreductase"/>
    <property type="match status" value="1"/>
</dbReference>
<dbReference type="PROSITE" id="PS00201">
    <property type="entry name" value="FLAVODOXIN"/>
    <property type="match status" value="1"/>
</dbReference>
<dbReference type="PROSITE" id="PS50902">
    <property type="entry name" value="FLAVODOXIN_LIKE"/>
    <property type="match status" value="1"/>
</dbReference>